<dbReference type="EMBL" id="X63315">
    <property type="protein sequence ID" value="CAA44926.1"/>
    <property type="molecule type" value="Genomic_DNA"/>
</dbReference>
<dbReference type="EMBL" id="X59720">
    <property type="protein sequence ID" value="CAA42326.1"/>
    <property type="molecule type" value="Genomic_DNA"/>
</dbReference>
<dbReference type="EMBL" id="BK006937">
    <property type="protein sequence ID" value="DAA07487.1"/>
    <property type="molecule type" value="Genomic_DNA"/>
</dbReference>
<dbReference type="PIR" id="S19516">
    <property type="entry name" value="S19516"/>
</dbReference>
<dbReference type="RefSeq" id="NP_009935.1">
    <property type="nucleotide sequence ID" value="NM_001178722.1"/>
</dbReference>
<dbReference type="SMR" id="P25343"/>
<dbReference type="BioGRID" id="30988">
    <property type="interactions" value="1046"/>
</dbReference>
<dbReference type="ComplexPortal" id="CPX-1335">
    <property type="entry name" value="RVS161-RVS167 amphiphysin complex"/>
</dbReference>
<dbReference type="DIP" id="DIP-1601N"/>
<dbReference type="FunCoup" id="P25343">
    <property type="interactions" value="547"/>
</dbReference>
<dbReference type="IntAct" id="P25343">
    <property type="interactions" value="49"/>
</dbReference>
<dbReference type="MINT" id="P25343"/>
<dbReference type="STRING" id="4932.YCR009C"/>
<dbReference type="TCDB" id="8.A.34.2.1">
    <property type="family name" value="the endophilin (endophilin) family"/>
</dbReference>
<dbReference type="iPTMnet" id="P25343"/>
<dbReference type="PaxDb" id="4932-YCR009C"/>
<dbReference type="PeptideAtlas" id="P25343"/>
<dbReference type="EnsemblFungi" id="YCR009C_mRNA">
    <property type="protein sequence ID" value="YCR009C"/>
    <property type="gene ID" value="YCR009C"/>
</dbReference>
<dbReference type="GeneID" id="850367"/>
<dbReference type="KEGG" id="sce:YCR009C"/>
<dbReference type="AGR" id="SGD:S000000602"/>
<dbReference type="SGD" id="S000000602">
    <property type="gene designation" value="RVS161"/>
</dbReference>
<dbReference type="VEuPathDB" id="FungiDB:YCR009C"/>
<dbReference type="eggNOG" id="KOG3771">
    <property type="taxonomic scope" value="Eukaryota"/>
</dbReference>
<dbReference type="GeneTree" id="ENSGT00950000182882"/>
<dbReference type="HOGENOM" id="CLU_072096_0_0_1"/>
<dbReference type="InParanoid" id="P25343"/>
<dbReference type="OMA" id="TRFCAYF"/>
<dbReference type="OrthoDB" id="446293at2759"/>
<dbReference type="BioCyc" id="YEAST:G3O-29326-MONOMER"/>
<dbReference type="BioGRID-ORCS" id="850367">
    <property type="hits" value="0 hits in 10 CRISPR screens"/>
</dbReference>
<dbReference type="PRO" id="PR:P25343"/>
<dbReference type="Proteomes" id="UP000002311">
    <property type="component" value="Chromosome III"/>
</dbReference>
<dbReference type="RNAct" id="P25343">
    <property type="molecule type" value="protein"/>
</dbReference>
<dbReference type="GO" id="GO:0030479">
    <property type="term" value="C:actin cortical patch"/>
    <property type="evidence" value="ECO:0000314"/>
    <property type="project" value="SGD"/>
</dbReference>
<dbReference type="GO" id="GO:0015629">
    <property type="term" value="C:actin cytoskeleton"/>
    <property type="evidence" value="ECO:0000318"/>
    <property type="project" value="GO_Central"/>
</dbReference>
<dbReference type="GO" id="GO:0005829">
    <property type="term" value="C:cytosol"/>
    <property type="evidence" value="ECO:0007005"/>
    <property type="project" value="SGD"/>
</dbReference>
<dbReference type="GO" id="GO:0005937">
    <property type="term" value="C:mating projection"/>
    <property type="evidence" value="ECO:0000314"/>
    <property type="project" value="SGD"/>
</dbReference>
<dbReference type="GO" id="GO:0043332">
    <property type="term" value="C:mating projection tip"/>
    <property type="evidence" value="ECO:0007005"/>
    <property type="project" value="SGD"/>
</dbReference>
<dbReference type="GO" id="GO:0031097">
    <property type="term" value="C:medial cortex"/>
    <property type="evidence" value="ECO:0000318"/>
    <property type="project" value="GO_Central"/>
</dbReference>
<dbReference type="GO" id="GO:0045121">
    <property type="term" value="C:membrane raft"/>
    <property type="evidence" value="ECO:0000314"/>
    <property type="project" value="SGD"/>
</dbReference>
<dbReference type="GO" id="GO:1990528">
    <property type="term" value="C:Rvs161p-Rvs167p complex"/>
    <property type="evidence" value="ECO:0000353"/>
    <property type="project" value="SGD"/>
</dbReference>
<dbReference type="GO" id="GO:0008092">
    <property type="term" value="F:cytoskeletal protein binding"/>
    <property type="evidence" value="ECO:0000353"/>
    <property type="project" value="SGD"/>
</dbReference>
<dbReference type="GO" id="GO:0051666">
    <property type="term" value="P:actin cortical patch localization"/>
    <property type="evidence" value="ECO:0000315"/>
    <property type="project" value="SGD"/>
</dbReference>
<dbReference type="GO" id="GO:0030036">
    <property type="term" value="P:actin cytoskeleton organization"/>
    <property type="evidence" value="ECO:0000315"/>
    <property type="project" value="SGD"/>
</dbReference>
<dbReference type="GO" id="GO:0007015">
    <property type="term" value="P:actin filament organization"/>
    <property type="evidence" value="ECO:0007669"/>
    <property type="project" value="InterPro"/>
</dbReference>
<dbReference type="GO" id="GO:0000747">
    <property type="term" value="P:conjugation with cellular fusion"/>
    <property type="evidence" value="ECO:0000315"/>
    <property type="project" value="SGD"/>
</dbReference>
<dbReference type="GO" id="GO:0006897">
    <property type="term" value="P:endocytosis"/>
    <property type="evidence" value="ECO:0000315"/>
    <property type="project" value="SGD"/>
</dbReference>
<dbReference type="GO" id="GO:0060988">
    <property type="term" value="P:lipid tube assembly"/>
    <property type="evidence" value="ECO:0000314"/>
    <property type="project" value="ComplexPortal"/>
</dbReference>
<dbReference type="GO" id="GO:0097320">
    <property type="term" value="P:plasma membrane tubulation"/>
    <property type="evidence" value="ECO:0000314"/>
    <property type="project" value="ComplexPortal"/>
</dbReference>
<dbReference type="GO" id="GO:0030100">
    <property type="term" value="P:regulation of endocytosis"/>
    <property type="evidence" value="ECO:0000314"/>
    <property type="project" value="ComplexPortal"/>
</dbReference>
<dbReference type="GO" id="GO:0006970">
    <property type="term" value="P:response to osmotic stress"/>
    <property type="evidence" value="ECO:0000315"/>
    <property type="project" value="SGD"/>
</dbReference>
<dbReference type="GO" id="GO:0042594">
    <property type="term" value="P:response to starvation"/>
    <property type="evidence" value="ECO:0000315"/>
    <property type="project" value="SGD"/>
</dbReference>
<dbReference type="CDD" id="cd07591">
    <property type="entry name" value="BAR_Rvs161p"/>
    <property type="match status" value="1"/>
</dbReference>
<dbReference type="FunFam" id="1.20.1270.60:FF:000014">
    <property type="entry name" value="Protein hob3, variant"/>
    <property type="match status" value="1"/>
</dbReference>
<dbReference type="Gene3D" id="1.20.1270.60">
    <property type="entry name" value="Arfaptin homology (AH) domain/BAR domain"/>
    <property type="match status" value="1"/>
</dbReference>
<dbReference type="InterPro" id="IPR027267">
    <property type="entry name" value="AH/BAR_dom_sf"/>
</dbReference>
<dbReference type="InterPro" id="IPR004148">
    <property type="entry name" value="BAR_dom"/>
</dbReference>
<dbReference type="InterPro" id="IPR046982">
    <property type="entry name" value="BIN3/RVS161-like"/>
</dbReference>
<dbReference type="InterPro" id="IPR037429">
    <property type="entry name" value="Rvs161/Hob3_BAR"/>
</dbReference>
<dbReference type="PANTHER" id="PTHR47174">
    <property type="entry name" value="BRIDGING INTEGRATOR 3"/>
    <property type="match status" value="1"/>
</dbReference>
<dbReference type="PANTHER" id="PTHR47174:SF3">
    <property type="entry name" value="BRIDGING INTEGRATOR 3"/>
    <property type="match status" value="1"/>
</dbReference>
<dbReference type="Pfam" id="PF03114">
    <property type="entry name" value="BAR"/>
    <property type="match status" value="1"/>
</dbReference>
<dbReference type="SMART" id="SM00721">
    <property type="entry name" value="BAR"/>
    <property type="match status" value="1"/>
</dbReference>
<dbReference type="SUPFAM" id="SSF103657">
    <property type="entry name" value="BAR/IMD domain-like"/>
    <property type="match status" value="1"/>
</dbReference>
<dbReference type="PROSITE" id="PS51021">
    <property type="entry name" value="BAR"/>
    <property type="match status" value="1"/>
</dbReference>
<keyword id="KW-0175">Coiled coil</keyword>
<keyword id="KW-0963">Cytoplasm</keyword>
<keyword id="KW-0206">Cytoskeleton</keyword>
<keyword id="KW-1185">Reference proteome</keyword>
<evidence type="ECO:0000255" key="1"/>
<evidence type="ECO:0000255" key="2">
    <source>
        <dbReference type="PROSITE-ProRule" id="PRU00361"/>
    </source>
</evidence>
<evidence type="ECO:0000269" key="3">
    <source>
    </source>
</evidence>
<evidence type="ECO:0000305" key="4"/>
<organism>
    <name type="scientific">Saccharomyces cerevisiae (strain ATCC 204508 / S288c)</name>
    <name type="common">Baker's yeast</name>
    <dbReference type="NCBI Taxonomy" id="559292"/>
    <lineage>
        <taxon>Eukaryota</taxon>
        <taxon>Fungi</taxon>
        <taxon>Dikarya</taxon>
        <taxon>Ascomycota</taxon>
        <taxon>Saccharomycotina</taxon>
        <taxon>Saccharomycetes</taxon>
        <taxon>Saccharomycetales</taxon>
        <taxon>Saccharomycetaceae</taxon>
        <taxon>Saccharomyces</taxon>
    </lineage>
</organism>
<feature type="chain" id="PRO_0000192960" description="Reduced viability upon starvation protein 161">
    <location>
        <begin position="1"/>
        <end position="265"/>
    </location>
</feature>
<feature type="domain" description="BAR" evidence="2">
    <location>
        <begin position="15"/>
        <end position="239"/>
    </location>
</feature>
<feature type="coiled-coil region" evidence="1">
    <location>
        <begin position="126"/>
        <end position="193"/>
    </location>
</feature>
<feature type="sequence conflict" description="In Ref. 1; CAA44926." evidence="4" ref="1">
    <original>Q</original>
    <variation>E</variation>
    <location>
        <position position="95"/>
    </location>
</feature>
<proteinExistence type="evidence at protein level"/>
<protein>
    <recommendedName>
        <fullName>Reduced viability upon starvation protein 161</fullName>
    </recommendedName>
</protein>
<accession>P25343</accession>
<accession>D6VR18</accession>
<name>RV161_YEAST</name>
<reference key="1">
    <citation type="journal article" date="1990" name="Yeast">
        <title>Sequence of the yeast gene RVS 161 located on chromosome III.</title>
        <authorList>
            <person name="Urdaci M."/>
            <person name="Dulau L."/>
            <person name="Aigle M."/>
            <person name="Crouzet M."/>
        </authorList>
    </citation>
    <scope>NUCLEOTIDE SEQUENCE [GENOMIC DNA]</scope>
    <source>
        <strain>ATCC 44827 / SKQ2N</strain>
    </source>
</reference>
<reference key="2">
    <citation type="journal article" date="1992" name="Yeast">
        <title>The complete sequence of a 10.8 kb segment distal of SUF2 on the right arm of chromosome III from Saccharomyces cerevisiae reveals seven open reading frames including the RVS161, ADP1 and PGK genes.</title>
        <authorList>
            <person name="Skala J."/>
            <person name="Purnelle B."/>
            <person name="Goffeau A."/>
        </authorList>
    </citation>
    <scope>NUCLEOTIDE SEQUENCE [GENOMIC DNA]</scope>
</reference>
<reference key="3">
    <citation type="journal article" date="1992" name="Nature">
        <title>The complete DNA sequence of yeast chromosome III.</title>
        <authorList>
            <person name="Oliver S.G."/>
            <person name="van der Aart Q.J.M."/>
            <person name="Agostoni-Carbone M.L."/>
            <person name="Aigle M."/>
            <person name="Alberghina L."/>
            <person name="Alexandraki D."/>
            <person name="Antoine G."/>
            <person name="Anwar R."/>
            <person name="Ballesta J.P.G."/>
            <person name="Benit P."/>
            <person name="Berben G."/>
            <person name="Bergantino E."/>
            <person name="Biteau N."/>
            <person name="Bolle P.-A."/>
            <person name="Bolotin-Fukuhara M."/>
            <person name="Brown A."/>
            <person name="Brown A.J.P."/>
            <person name="Buhler J.-M."/>
            <person name="Carcano C."/>
            <person name="Carignani G."/>
            <person name="Cederberg H."/>
            <person name="Chanet R."/>
            <person name="Contreras R."/>
            <person name="Crouzet M."/>
            <person name="Daignan-Fornier B."/>
            <person name="Defoor E."/>
            <person name="Delgado M.D."/>
            <person name="Demolder J."/>
            <person name="Doira C."/>
            <person name="Dubois E."/>
            <person name="Dujon B."/>
            <person name="Duesterhoeft A."/>
            <person name="Erdmann D."/>
            <person name="Esteban M."/>
            <person name="Fabre F."/>
            <person name="Fairhead C."/>
            <person name="Faye G."/>
            <person name="Feldmann H."/>
            <person name="Fiers W."/>
            <person name="Francingues-Gaillard M.-C."/>
            <person name="Franco L."/>
            <person name="Frontali L."/>
            <person name="Fukuhara H."/>
            <person name="Fuller L.J."/>
            <person name="Galland P."/>
            <person name="Gent M.E."/>
            <person name="Gigot D."/>
            <person name="Gilliquet V."/>
            <person name="Glansdorff N."/>
            <person name="Goffeau A."/>
            <person name="Grenson M."/>
            <person name="Grisanti P."/>
            <person name="Grivell L.A."/>
            <person name="de Haan M."/>
            <person name="Haasemann M."/>
            <person name="Hatat D."/>
            <person name="Hoenicka J."/>
            <person name="Hegemann J.H."/>
            <person name="Herbert C.J."/>
            <person name="Hilger F."/>
            <person name="Hohmann S."/>
            <person name="Hollenberg C.P."/>
            <person name="Huse K."/>
            <person name="Iborra F."/>
            <person name="Indge K.J."/>
            <person name="Isono K."/>
            <person name="Jacq C."/>
            <person name="Jacquet M."/>
            <person name="James C.M."/>
            <person name="Jauniaux J.-C."/>
            <person name="Jia Y."/>
            <person name="Jimenez A."/>
            <person name="Kelly A."/>
            <person name="Kleinhans U."/>
            <person name="Kreisl P."/>
            <person name="Lanfranchi G."/>
            <person name="Lewis C."/>
            <person name="van der Linden C.G."/>
            <person name="Lucchini G."/>
            <person name="Lutzenkirchen K."/>
            <person name="Maat M.J."/>
            <person name="Mallet L."/>
            <person name="Mannhaupt G."/>
            <person name="Martegani E."/>
            <person name="Mathieu A."/>
            <person name="Maurer C.T.C."/>
            <person name="McConnell D."/>
            <person name="McKee R.A."/>
            <person name="Messenguy F."/>
            <person name="Mewes H.-W."/>
            <person name="Molemans F."/>
            <person name="Montague M.A."/>
            <person name="Muzi Falconi M."/>
            <person name="Navas L."/>
            <person name="Newlon C.S."/>
            <person name="Noone D."/>
            <person name="Pallier C."/>
            <person name="Panzeri L."/>
            <person name="Pearson B.M."/>
            <person name="Perea J."/>
            <person name="Philippsen P."/>
            <person name="Pierard A."/>
            <person name="Planta R.J."/>
            <person name="Plevani P."/>
            <person name="Poetsch B."/>
            <person name="Pohl F.M."/>
            <person name="Purnelle B."/>
            <person name="Ramezani Rad M."/>
            <person name="Rasmussen S.W."/>
            <person name="Raynal A."/>
            <person name="Remacha M.A."/>
            <person name="Richterich P."/>
            <person name="Roberts A.B."/>
            <person name="Rodriguez F."/>
            <person name="Sanz E."/>
            <person name="Schaaff-Gerstenschlaeger I."/>
            <person name="Scherens B."/>
            <person name="Schweitzer B."/>
            <person name="Shu Y."/>
            <person name="Skala J."/>
            <person name="Slonimski P.P."/>
            <person name="Sor F."/>
            <person name="Soustelle C."/>
            <person name="Spiegelberg R."/>
            <person name="Stateva L.I."/>
            <person name="Steensma H.Y."/>
            <person name="Steiner S."/>
            <person name="Thierry A."/>
            <person name="Thireos G."/>
            <person name="Tzermia M."/>
            <person name="Urrestarazu L.A."/>
            <person name="Valle G."/>
            <person name="Vetter I."/>
            <person name="van Vliet-Reedijk J.C."/>
            <person name="Voet M."/>
            <person name="Volckaert G."/>
            <person name="Vreken P."/>
            <person name="Wang H."/>
            <person name="Warmington J.R."/>
            <person name="von Wettstein D."/>
            <person name="Wicksteed B.L."/>
            <person name="Wilson C."/>
            <person name="Wurst H."/>
            <person name="Xu G."/>
            <person name="Yoshikawa A."/>
            <person name="Zimmermann F.K."/>
            <person name="Sgouros J.G."/>
        </authorList>
    </citation>
    <scope>NUCLEOTIDE SEQUENCE [LARGE SCALE GENOMIC DNA]</scope>
    <source>
        <strain>ATCC 204508 / S288c</strain>
    </source>
</reference>
<reference key="4">
    <citation type="journal article" date="2014" name="G3 (Bethesda)">
        <title>The reference genome sequence of Saccharomyces cerevisiae: Then and now.</title>
        <authorList>
            <person name="Engel S.R."/>
            <person name="Dietrich F.S."/>
            <person name="Fisk D.G."/>
            <person name="Binkley G."/>
            <person name="Balakrishnan R."/>
            <person name="Costanzo M.C."/>
            <person name="Dwight S.S."/>
            <person name="Hitz B.C."/>
            <person name="Karra K."/>
            <person name="Nash R.S."/>
            <person name="Weng S."/>
            <person name="Wong E.D."/>
            <person name="Lloyd P."/>
            <person name="Skrzypek M.S."/>
            <person name="Miyasato S.R."/>
            <person name="Simison M."/>
            <person name="Cherry J.M."/>
        </authorList>
    </citation>
    <scope>GENOME REANNOTATION</scope>
    <source>
        <strain>ATCC 204508 / S288c</strain>
    </source>
</reference>
<reference key="5">
    <citation type="journal article" date="1991" name="Yeast">
        <title>Yeast mutant affected for viability upon nutrient starvation: characterization and cloning of the RVS161 gene.</title>
        <authorList>
            <person name="Crouzet M."/>
            <person name="Urdaci M."/>
            <person name="Dulau L."/>
            <person name="Aigle M."/>
        </authorList>
    </citation>
    <scope>CHARACTERIZATION</scope>
    <source>
        <strain>ATCC 44827 / SKQ2N</strain>
    </source>
</reference>
<reference key="6">
    <citation type="journal article" date="2003" name="Nature">
        <title>Global analysis of protein expression in yeast.</title>
        <authorList>
            <person name="Ghaemmaghami S."/>
            <person name="Huh W.-K."/>
            <person name="Bower K."/>
            <person name="Howson R.W."/>
            <person name="Belle A."/>
            <person name="Dephoure N."/>
            <person name="O'Shea E.K."/>
            <person name="Weissman J.S."/>
        </authorList>
    </citation>
    <scope>LEVEL OF PROTEIN EXPRESSION [LARGE SCALE ANALYSIS]</scope>
</reference>
<comment type="function">
    <text>Component of a cytoskeletal structure that is required for the formation of endocytic vesicles at the plasma membrane level.</text>
</comment>
<comment type="interaction">
    <interactant intactId="EBI-14490">
        <id>P25343</id>
    </interactant>
    <interactant intactId="EBI-14500">
        <id>P39743</id>
        <label>RVS167</label>
    </interactant>
    <organismsDiffer>false</organismsDiffer>
    <experiments>17</experiments>
</comment>
<comment type="subcellular location">
    <subcellularLocation>
        <location>Cytoplasm</location>
        <location>Cytoskeleton</location>
    </subcellularLocation>
</comment>
<comment type="miscellaneous">
    <text>Mutations in this gene results in sensitivity to carbon, nitrogen and sulfur starvation.</text>
</comment>
<comment type="miscellaneous">
    <text evidence="3">Present with 7390 molecules/cell in log phase SD medium.</text>
</comment>
<gene>
    <name type="primary">RVS161</name>
    <name type="synonym">END6</name>
    <name type="synonym">SPE161</name>
    <name type="ordered locus">YCR009C</name>
    <name type="ORF">YCR9C</name>
</gene>
<sequence length="265" mass="30250">MSWEGFKKAINRAGHSVIIKNVDKTIDKEYDMEERRYKVLQRAGEALQKEAKGFLDSLRAVTASQTTIAEVISNLYDDSKYVAGGGYNVGNYYLQCVQDFDSETVKQLDGPLRETVLDPITKFSTYFKEIEEAIKKRDHKKQDFDAAKAKVRRLVDKPAKDASKLPRAEKELSLAKDIFENLNNQLKTELPQLVSLRVPYFDPSFEALIKIQLRFCTDGYTRLAQIQQYLDQQSRDDYANGLLDTKIEELLGQMTSLDICALGIK</sequence>